<accession>A7ZU42</accession>
<dbReference type="EC" id="2.7.-.-" evidence="1"/>
<dbReference type="EMBL" id="CP000800">
    <property type="protein sequence ID" value="ABV19836.1"/>
    <property type="molecule type" value="Genomic_DNA"/>
</dbReference>
<dbReference type="RefSeq" id="WP_000187530.1">
    <property type="nucleotide sequence ID" value="NC_009801.1"/>
</dbReference>
<dbReference type="SMR" id="A7ZU42"/>
<dbReference type="GeneID" id="75204829"/>
<dbReference type="KEGG" id="ecw:EcE24377A_4356"/>
<dbReference type="HOGENOM" id="CLU_006533_0_0_6"/>
<dbReference type="UniPathway" id="UPA00232"/>
<dbReference type="Proteomes" id="UP000001122">
    <property type="component" value="Chromosome"/>
</dbReference>
<dbReference type="GO" id="GO:0005886">
    <property type="term" value="C:plasma membrane"/>
    <property type="evidence" value="ECO:0007669"/>
    <property type="project" value="UniProtKB-SubCell"/>
</dbReference>
<dbReference type="GO" id="GO:0005524">
    <property type="term" value="F:ATP binding"/>
    <property type="evidence" value="ECO:0007669"/>
    <property type="project" value="UniProtKB-KW"/>
</dbReference>
<dbReference type="GO" id="GO:0004672">
    <property type="term" value="F:protein kinase activity"/>
    <property type="evidence" value="ECO:0007669"/>
    <property type="project" value="UniProtKB-UniRule"/>
</dbReference>
<dbReference type="GO" id="GO:0010795">
    <property type="term" value="P:regulation of ubiquinone biosynthetic process"/>
    <property type="evidence" value="ECO:0007669"/>
    <property type="project" value="UniProtKB-UniRule"/>
</dbReference>
<dbReference type="GO" id="GO:0006744">
    <property type="term" value="P:ubiquinone biosynthetic process"/>
    <property type="evidence" value="ECO:0007669"/>
    <property type="project" value="UniProtKB-UniPathway"/>
</dbReference>
<dbReference type="CDD" id="cd13972">
    <property type="entry name" value="UbiB"/>
    <property type="match status" value="1"/>
</dbReference>
<dbReference type="HAMAP" id="MF_00414">
    <property type="entry name" value="UbiB"/>
    <property type="match status" value="1"/>
</dbReference>
<dbReference type="InterPro" id="IPR004147">
    <property type="entry name" value="ABC1_dom"/>
</dbReference>
<dbReference type="InterPro" id="IPR011009">
    <property type="entry name" value="Kinase-like_dom_sf"/>
</dbReference>
<dbReference type="InterPro" id="IPR010232">
    <property type="entry name" value="UbiB"/>
</dbReference>
<dbReference type="InterPro" id="IPR045308">
    <property type="entry name" value="UbiB_bact"/>
</dbReference>
<dbReference type="InterPro" id="IPR050154">
    <property type="entry name" value="UbiB_kinase"/>
</dbReference>
<dbReference type="NCBIfam" id="NF003404">
    <property type="entry name" value="PRK04750.1"/>
    <property type="match status" value="1"/>
</dbReference>
<dbReference type="NCBIfam" id="TIGR01982">
    <property type="entry name" value="UbiB"/>
    <property type="match status" value="1"/>
</dbReference>
<dbReference type="PANTHER" id="PTHR10566">
    <property type="entry name" value="CHAPERONE-ACTIVITY OF BC1 COMPLEX CABC1 -RELATED"/>
    <property type="match status" value="1"/>
</dbReference>
<dbReference type="PANTHER" id="PTHR10566:SF113">
    <property type="entry name" value="PROTEIN ACTIVITY OF BC1 COMPLEX KINASE 7, CHLOROPLASTIC"/>
    <property type="match status" value="1"/>
</dbReference>
<dbReference type="Pfam" id="PF03109">
    <property type="entry name" value="ABC1"/>
    <property type="match status" value="1"/>
</dbReference>
<dbReference type="SUPFAM" id="SSF56112">
    <property type="entry name" value="Protein kinase-like (PK-like)"/>
    <property type="match status" value="1"/>
</dbReference>
<keyword id="KW-0067">ATP-binding</keyword>
<keyword id="KW-0997">Cell inner membrane</keyword>
<keyword id="KW-1003">Cell membrane</keyword>
<keyword id="KW-0418">Kinase</keyword>
<keyword id="KW-0472">Membrane</keyword>
<keyword id="KW-0547">Nucleotide-binding</keyword>
<keyword id="KW-1185">Reference proteome</keyword>
<keyword id="KW-0808">Transferase</keyword>
<keyword id="KW-0812">Transmembrane</keyword>
<keyword id="KW-1133">Transmembrane helix</keyword>
<keyword id="KW-0831">Ubiquinone biosynthesis</keyword>
<gene>
    <name evidence="1" type="primary">ubiB</name>
    <name type="ordered locus">EcE24377A_4356</name>
</gene>
<sequence length="546" mass="63203">MTPGEVRRLYFIIRTFLSYGLDELIPKMRITLPLRLWRYSLFWMPNRHKDKLLGERLRLALQELGPVWIKFGQMLSTRRDLFPPHIADQLALLQDKVAPFDGKLAKQQIEAAMGGLPVEAWFDDFEIKPLASASIAQVHTARLKSNGKEVVIKVIRPDILPVIKADLKLIYRLARWVPRLLPDGRRLRPTEVVREYEKTLIDELNLLRESANAIQLRRNFEDSPMLYIPEVYPDYCSEGMMVMERIYGIPVSDVAALEKNGTNMKLLAERGVQVFFTQVFRDSFFHADMHPGNIFVSYEHPENPKYIGIDCGIVGSLNKEDKRYLAENFIAFFNRDYRKVAELHVDSGWVPPDTNVEEFEFAIRTVCEPIFEKPLAEISFGHVLLNLFNTARRFNMEVQPQLVLLQKTLLYVEGVGRQLYPQLDLWKTAKPFLESWIKDQVGIPALVRAFKEKAPFWVEKMPELPELVYDSLRQGKYLQHSVDKIARELQSNHVRQGQSRYFLGIGATLVLSGTFLLVSRPEWGLMPGWLMAGGLIAWFVGWRKTR</sequence>
<reference key="1">
    <citation type="journal article" date="2008" name="J. Bacteriol.">
        <title>The pangenome structure of Escherichia coli: comparative genomic analysis of E. coli commensal and pathogenic isolates.</title>
        <authorList>
            <person name="Rasko D.A."/>
            <person name="Rosovitz M.J."/>
            <person name="Myers G.S.A."/>
            <person name="Mongodin E.F."/>
            <person name="Fricke W.F."/>
            <person name="Gajer P."/>
            <person name="Crabtree J."/>
            <person name="Sebaihia M."/>
            <person name="Thomson N.R."/>
            <person name="Chaudhuri R."/>
            <person name="Henderson I.R."/>
            <person name="Sperandio V."/>
            <person name="Ravel J."/>
        </authorList>
    </citation>
    <scope>NUCLEOTIDE SEQUENCE [LARGE SCALE GENOMIC DNA]</scope>
    <source>
        <strain>E24377A / ETEC</strain>
    </source>
</reference>
<feature type="chain" id="PRO_1000060064" description="Probable protein kinase UbiB">
    <location>
        <begin position="1"/>
        <end position="546"/>
    </location>
</feature>
<feature type="transmembrane region" description="Helical" evidence="1">
    <location>
        <begin position="501"/>
        <end position="521"/>
    </location>
</feature>
<feature type="transmembrane region" description="Helical" evidence="1">
    <location>
        <begin position="522"/>
        <end position="542"/>
    </location>
</feature>
<feature type="domain" description="Protein kinase" evidence="1">
    <location>
        <begin position="124"/>
        <end position="502"/>
    </location>
</feature>
<feature type="active site" description="Proton acceptor" evidence="1">
    <location>
        <position position="288"/>
    </location>
</feature>
<feature type="binding site" evidence="1">
    <location>
        <begin position="130"/>
        <end position="138"/>
    </location>
    <ligand>
        <name>ATP</name>
        <dbReference type="ChEBI" id="CHEBI:30616"/>
    </ligand>
</feature>
<feature type="binding site" evidence="1">
    <location>
        <position position="153"/>
    </location>
    <ligand>
        <name>ATP</name>
        <dbReference type="ChEBI" id="CHEBI:30616"/>
    </ligand>
</feature>
<proteinExistence type="inferred from homology"/>
<evidence type="ECO:0000255" key="1">
    <source>
        <dbReference type="HAMAP-Rule" id="MF_00414"/>
    </source>
</evidence>
<comment type="function">
    <text evidence="1">Is probably a protein kinase regulator of UbiI activity which is involved in aerobic coenzyme Q (ubiquinone) biosynthesis.</text>
</comment>
<comment type="pathway">
    <text>Cofactor biosynthesis; ubiquinone biosynthesis [regulation].</text>
</comment>
<comment type="subcellular location">
    <subcellularLocation>
        <location evidence="1">Cell inner membrane</location>
        <topology evidence="1">Multi-pass membrane protein</topology>
    </subcellularLocation>
</comment>
<comment type="similarity">
    <text evidence="1">Belongs to the ABC1 family. UbiB subfamily.</text>
</comment>
<name>UBIB_ECO24</name>
<protein>
    <recommendedName>
        <fullName evidence="1">Probable protein kinase UbiB</fullName>
        <ecNumber evidence="1">2.7.-.-</ecNumber>
    </recommendedName>
    <alternativeName>
        <fullName evidence="1">Ubiquinone biosynthesis protein UbiB</fullName>
    </alternativeName>
</protein>
<organism>
    <name type="scientific">Escherichia coli O139:H28 (strain E24377A / ETEC)</name>
    <dbReference type="NCBI Taxonomy" id="331111"/>
    <lineage>
        <taxon>Bacteria</taxon>
        <taxon>Pseudomonadati</taxon>
        <taxon>Pseudomonadota</taxon>
        <taxon>Gammaproteobacteria</taxon>
        <taxon>Enterobacterales</taxon>
        <taxon>Enterobacteriaceae</taxon>
        <taxon>Escherichia</taxon>
    </lineage>
</organism>